<feature type="initiator methionine" description="Removed" evidence="1">
    <location>
        <position position="1"/>
    </location>
</feature>
<feature type="chain" id="PRO_0000200771" description="ATP-dependent RNA helicase RhlB">
    <location>
        <begin position="2"/>
        <end position="421"/>
    </location>
</feature>
<feature type="domain" description="Helicase ATP-binding" evidence="2">
    <location>
        <begin position="40"/>
        <end position="219"/>
    </location>
</feature>
<feature type="domain" description="Helicase C-terminal" evidence="2">
    <location>
        <begin position="245"/>
        <end position="390"/>
    </location>
</feature>
<feature type="region of interest" description="Disordered" evidence="3">
    <location>
        <begin position="392"/>
        <end position="421"/>
    </location>
</feature>
<feature type="short sequence motif" description="Q motif">
    <location>
        <begin position="9"/>
        <end position="37"/>
    </location>
</feature>
<feature type="short sequence motif" description="DEAD box">
    <location>
        <begin position="165"/>
        <end position="168"/>
    </location>
</feature>
<feature type="compositionally biased region" description="Low complexity" evidence="3">
    <location>
        <begin position="402"/>
        <end position="414"/>
    </location>
</feature>
<feature type="binding site" evidence="2">
    <location>
        <begin position="53"/>
        <end position="60"/>
    </location>
    <ligand>
        <name>ATP</name>
        <dbReference type="ChEBI" id="CHEBI:30616"/>
    </ligand>
</feature>
<proteinExistence type="inferred from homology"/>
<reference key="1">
    <citation type="journal article" date="2002" name="Proc. Natl. Acad. Sci. U.S.A.">
        <title>Extensive mosaic structure revealed by the complete genome sequence of uropathogenic Escherichia coli.</title>
        <authorList>
            <person name="Welch R.A."/>
            <person name="Burland V."/>
            <person name="Plunkett G. III"/>
            <person name="Redford P."/>
            <person name="Roesch P."/>
            <person name="Rasko D."/>
            <person name="Buckles E.L."/>
            <person name="Liou S.-R."/>
            <person name="Boutin A."/>
            <person name="Hackett J."/>
            <person name="Stroud D."/>
            <person name="Mayhew G.F."/>
            <person name="Rose D.J."/>
            <person name="Zhou S."/>
            <person name="Schwartz D.C."/>
            <person name="Perna N.T."/>
            <person name="Mobley H.L.T."/>
            <person name="Donnenberg M.S."/>
            <person name="Blattner F.R."/>
        </authorList>
    </citation>
    <scope>NUCLEOTIDE SEQUENCE [LARGE SCALE GENOMIC DNA]</scope>
    <source>
        <strain>CFT073 / ATCC 700928 / UPEC</strain>
    </source>
</reference>
<sequence>MSKTHLTEQKFSDFALHPKVVEALEKKGFHNCTPIQALALPLTLAGRDVAGQAQTGTGKTMAFLTSTFHYLLSHPAIADRKVNQPRALIMAPTRELAVQIHADAEPLAEATGLKLGLAYGGDGYDKQLKVLESGVDILIGTTGRLIDYAKQNHINLGAIQVVVLDEADRMYDLGFIKDIRWLFRRMPPANQRLNMLFSATLSYRVRELAFEQMNNAEYIEVEPEQKTGHRIKEELFYPSNEEKMRLLQTLIEEEWPDRAIIFANTKHRCEEIWGHLAADGHRVGLLTGDVAQKKRLRILDEFTRGDLDILVATDVAARGLHIPAVTHVFNYDLPDDCEDYVHRIGRTGRAGASGHSISLACEEYALNLPAIETYIGHSIPVSKYNPDALMTDLPKPLRLTRPRTGNGPRRTGAPRNRRRSG</sequence>
<keyword id="KW-0067">ATP-binding</keyword>
<keyword id="KW-0963">Cytoplasm</keyword>
<keyword id="KW-0347">Helicase</keyword>
<keyword id="KW-0378">Hydrolase</keyword>
<keyword id="KW-0547">Nucleotide-binding</keyword>
<keyword id="KW-1185">Reference proteome</keyword>
<keyword id="KW-0694">RNA-binding</keyword>
<protein>
    <recommendedName>
        <fullName evidence="2">ATP-dependent RNA helicase RhlB</fullName>
        <ecNumber evidence="2">3.6.4.13</ecNumber>
    </recommendedName>
</protein>
<comment type="function">
    <text evidence="2">DEAD-box RNA helicase involved in RNA degradation. Has RNA-dependent ATPase activity and unwinds double-stranded RNA.</text>
</comment>
<comment type="catalytic activity">
    <reaction evidence="2">
        <text>ATP + H2O = ADP + phosphate + H(+)</text>
        <dbReference type="Rhea" id="RHEA:13065"/>
        <dbReference type="ChEBI" id="CHEBI:15377"/>
        <dbReference type="ChEBI" id="CHEBI:15378"/>
        <dbReference type="ChEBI" id="CHEBI:30616"/>
        <dbReference type="ChEBI" id="CHEBI:43474"/>
        <dbReference type="ChEBI" id="CHEBI:456216"/>
        <dbReference type="EC" id="3.6.4.13"/>
    </reaction>
</comment>
<comment type="subunit">
    <text evidence="2">Component of the RNA degradosome, which is a multiprotein complex involved in RNA processing and mRNA degradation.</text>
</comment>
<comment type="subcellular location">
    <subcellularLocation>
        <location evidence="2">Cytoplasm</location>
    </subcellularLocation>
</comment>
<comment type="similarity">
    <text evidence="2">Belongs to the DEAD box helicase family. RhlB subfamily.</text>
</comment>
<evidence type="ECO:0000250" key="1"/>
<evidence type="ECO:0000255" key="2">
    <source>
        <dbReference type="HAMAP-Rule" id="MF_00661"/>
    </source>
</evidence>
<evidence type="ECO:0000256" key="3">
    <source>
        <dbReference type="SAM" id="MobiDB-lite"/>
    </source>
</evidence>
<organism>
    <name type="scientific">Escherichia coli O6:H1 (strain CFT073 / ATCC 700928 / UPEC)</name>
    <dbReference type="NCBI Taxonomy" id="199310"/>
    <lineage>
        <taxon>Bacteria</taxon>
        <taxon>Pseudomonadati</taxon>
        <taxon>Pseudomonadota</taxon>
        <taxon>Gammaproteobacteria</taxon>
        <taxon>Enterobacterales</taxon>
        <taxon>Enterobacteriaceae</taxon>
        <taxon>Escherichia</taxon>
    </lineage>
</organism>
<name>RHLB_ECOL6</name>
<dbReference type="EC" id="3.6.4.13" evidence="2"/>
<dbReference type="EMBL" id="AE014075">
    <property type="protein sequence ID" value="AAN83132.1"/>
    <property type="molecule type" value="Genomic_DNA"/>
</dbReference>
<dbReference type="RefSeq" id="WP_000047499.1">
    <property type="nucleotide sequence ID" value="NZ_CP051263.1"/>
</dbReference>
<dbReference type="SMR" id="P0A8J9"/>
<dbReference type="STRING" id="199310.c4700"/>
<dbReference type="GeneID" id="93778164"/>
<dbReference type="KEGG" id="ecc:c4700"/>
<dbReference type="eggNOG" id="COG0513">
    <property type="taxonomic scope" value="Bacteria"/>
</dbReference>
<dbReference type="HOGENOM" id="CLU_003041_1_3_6"/>
<dbReference type="BioCyc" id="ECOL199310:C4700-MONOMER"/>
<dbReference type="Proteomes" id="UP000001410">
    <property type="component" value="Chromosome"/>
</dbReference>
<dbReference type="GO" id="GO:0005829">
    <property type="term" value="C:cytosol"/>
    <property type="evidence" value="ECO:0007669"/>
    <property type="project" value="TreeGrafter"/>
</dbReference>
<dbReference type="GO" id="GO:0005524">
    <property type="term" value="F:ATP binding"/>
    <property type="evidence" value="ECO:0007669"/>
    <property type="project" value="UniProtKB-UniRule"/>
</dbReference>
<dbReference type="GO" id="GO:0016887">
    <property type="term" value="F:ATP hydrolysis activity"/>
    <property type="evidence" value="ECO:0007669"/>
    <property type="project" value="RHEA"/>
</dbReference>
<dbReference type="GO" id="GO:0003723">
    <property type="term" value="F:RNA binding"/>
    <property type="evidence" value="ECO:0007669"/>
    <property type="project" value="UniProtKB-UniRule"/>
</dbReference>
<dbReference type="GO" id="GO:0003724">
    <property type="term" value="F:RNA helicase activity"/>
    <property type="evidence" value="ECO:0007669"/>
    <property type="project" value="UniProtKB-UniRule"/>
</dbReference>
<dbReference type="GO" id="GO:0006401">
    <property type="term" value="P:RNA catabolic process"/>
    <property type="evidence" value="ECO:0007669"/>
    <property type="project" value="UniProtKB-UniRule"/>
</dbReference>
<dbReference type="CDD" id="cd00268">
    <property type="entry name" value="DEADc"/>
    <property type="match status" value="1"/>
</dbReference>
<dbReference type="CDD" id="cd18787">
    <property type="entry name" value="SF2_C_DEAD"/>
    <property type="match status" value="1"/>
</dbReference>
<dbReference type="FunFam" id="3.40.50.300:FF:000008">
    <property type="entry name" value="ATP-dependent RNA helicase RhlB"/>
    <property type="match status" value="1"/>
</dbReference>
<dbReference type="FunFam" id="3.40.50.300:FF:000312">
    <property type="entry name" value="ATP-dependent RNA helicase RhlB"/>
    <property type="match status" value="1"/>
</dbReference>
<dbReference type="Gene3D" id="3.40.50.300">
    <property type="entry name" value="P-loop containing nucleotide triphosphate hydrolases"/>
    <property type="match status" value="2"/>
</dbReference>
<dbReference type="HAMAP" id="MF_00661">
    <property type="entry name" value="DEAD_helicase_RhlB"/>
    <property type="match status" value="1"/>
</dbReference>
<dbReference type="InterPro" id="IPR011545">
    <property type="entry name" value="DEAD/DEAH_box_helicase_dom"/>
</dbReference>
<dbReference type="InterPro" id="IPR050079">
    <property type="entry name" value="DEAD_box_RNA_helicase"/>
</dbReference>
<dbReference type="InterPro" id="IPR014001">
    <property type="entry name" value="Helicase_ATP-bd"/>
</dbReference>
<dbReference type="InterPro" id="IPR001650">
    <property type="entry name" value="Helicase_C-like"/>
</dbReference>
<dbReference type="InterPro" id="IPR027417">
    <property type="entry name" value="P-loop_NTPase"/>
</dbReference>
<dbReference type="InterPro" id="IPR000629">
    <property type="entry name" value="RNA-helicase_DEAD-box_CS"/>
</dbReference>
<dbReference type="InterPro" id="IPR023554">
    <property type="entry name" value="RNA_helicase_ATP-dep_RhlB"/>
</dbReference>
<dbReference type="InterPro" id="IPR014014">
    <property type="entry name" value="RNA_helicase_DEAD_Q_motif"/>
</dbReference>
<dbReference type="NCBIfam" id="NF003419">
    <property type="entry name" value="PRK04837.1"/>
    <property type="match status" value="1"/>
</dbReference>
<dbReference type="PANTHER" id="PTHR47959:SF10">
    <property type="entry name" value="ATP-DEPENDENT RNA HELICASE RHLB"/>
    <property type="match status" value="1"/>
</dbReference>
<dbReference type="PANTHER" id="PTHR47959">
    <property type="entry name" value="ATP-DEPENDENT RNA HELICASE RHLE-RELATED"/>
    <property type="match status" value="1"/>
</dbReference>
<dbReference type="Pfam" id="PF00270">
    <property type="entry name" value="DEAD"/>
    <property type="match status" value="1"/>
</dbReference>
<dbReference type="Pfam" id="PF00271">
    <property type="entry name" value="Helicase_C"/>
    <property type="match status" value="1"/>
</dbReference>
<dbReference type="SMART" id="SM00487">
    <property type="entry name" value="DEXDc"/>
    <property type="match status" value="1"/>
</dbReference>
<dbReference type="SMART" id="SM00490">
    <property type="entry name" value="HELICc"/>
    <property type="match status" value="1"/>
</dbReference>
<dbReference type="SUPFAM" id="SSF52540">
    <property type="entry name" value="P-loop containing nucleoside triphosphate hydrolases"/>
    <property type="match status" value="1"/>
</dbReference>
<dbReference type="PROSITE" id="PS00039">
    <property type="entry name" value="DEAD_ATP_HELICASE"/>
    <property type="match status" value="1"/>
</dbReference>
<dbReference type="PROSITE" id="PS51192">
    <property type="entry name" value="HELICASE_ATP_BIND_1"/>
    <property type="match status" value="1"/>
</dbReference>
<dbReference type="PROSITE" id="PS51194">
    <property type="entry name" value="HELICASE_CTER"/>
    <property type="match status" value="1"/>
</dbReference>
<dbReference type="PROSITE" id="PS51195">
    <property type="entry name" value="Q_MOTIF"/>
    <property type="match status" value="1"/>
</dbReference>
<gene>
    <name evidence="2" type="primary">rhlB</name>
    <name type="ordered locus">c4700</name>
</gene>
<accession>P0A8J9</accession>
<accession>P24229</accession>